<dbReference type="EC" id="1.4.99.-" evidence="1"/>
<dbReference type="EMBL" id="CP001111">
    <property type="protein sequence ID" value="ACF50149.1"/>
    <property type="molecule type" value="Genomic_DNA"/>
</dbReference>
<dbReference type="RefSeq" id="WP_004140565.1">
    <property type="nucleotide sequence ID" value="NC_011071.1"/>
</dbReference>
<dbReference type="SMR" id="B4SIE4"/>
<dbReference type="STRING" id="391008.Smal_0444"/>
<dbReference type="KEGG" id="smt:Smal_0444"/>
<dbReference type="eggNOG" id="COG0665">
    <property type="taxonomic scope" value="Bacteria"/>
</dbReference>
<dbReference type="HOGENOM" id="CLU_007884_9_2_6"/>
<dbReference type="OrthoDB" id="9805337at2"/>
<dbReference type="UniPathway" id="UPA00043">
    <property type="reaction ID" value="UER00498"/>
</dbReference>
<dbReference type="Proteomes" id="UP000001867">
    <property type="component" value="Chromosome"/>
</dbReference>
<dbReference type="GO" id="GO:0005737">
    <property type="term" value="C:cytoplasm"/>
    <property type="evidence" value="ECO:0007669"/>
    <property type="project" value="TreeGrafter"/>
</dbReference>
<dbReference type="GO" id="GO:0005886">
    <property type="term" value="C:plasma membrane"/>
    <property type="evidence" value="ECO:0007669"/>
    <property type="project" value="TreeGrafter"/>
</dbReference>
<dbReference type="GO" id="GO:0008718">
    <property type="term" value="F:D-amino-acid dehydrogenase activity"/>
    <property type="evidence" value="ECO:0007669"/>
    <property type="project" value="UniProtKB-UniRule"/>
</dbReference>
<dbReference type="GO" id="GO:0055130">
    <property type="term" value="P:D-alanine catabolic process"/>
    <property type="evidence" value="ECO:0007669"/>
    <property type="project" value="UniProtKB-UniPathway"/>
</dbReference>
<dbReference type="FunFam" id="3.50.50.60:FF:000020">
    <property type="entry name" value="D-amino acid dehydrogenase"/>
    <property type="match status" value="1"/>
</dbReference>
<dbReference type="Gene3D" id="3.30.9.10">
    <property type="entry name" value="D-Amino Acid Oxidase, subunit A, domain 2"/>
    <property type="match status" value="1"/>
</dbReference>
<dbReference type="Gene3D" id="3.50.50.60">
    <property type="entry name" value="FAD/NAD(P)-binding domain"/>
    <property type="match status" value="2"/>
</dbReference>
<dbReference type="HAMAP" id="MF_01202">
    <property type="entry name" value="DadA"/>
    <property type="match status" value="1"/>
</dbReference>
<dbReference type="InterPro" id="IPR023080">
    <property type="entry name" value="DadA"/>
</dbReference>
<dbReference type="InterPro" id="IPR006076">
    <property type="entry name" value="FAD-dep_OxRdtase"/>
</dbReference>
<dbReference type="InterPro" id="IPR036188">
    <property type="entry name" value="FAD/NAD-bd_sf"/>
</dbReference>
<dbReference type="NCBIfam" id="NF001933">
    <property type="entry name" value="PRK00711.1"/>
    <property type="match status" value="1"/>
</dbReference>
<dbReference type="PANTHER" id="PTHR13847:SF280">
    <property type="entry name" value="D-AMINO ACID DEHYDROGENASE"/>
    <property type="match status" value="1"/>
</dbReference>
<dbReference type="PANTHER" id="PTHR13847">
    <property type="entry name" value="SARCOSINE DEHYDROGENASE-RELATED"/>
    <property type="match status" value="1"/>
</dbReference>
<dbReference type="Pfam" id="PF01266">
    <property type="entry name" value="DAO"/>
    <property type="match status" value="1"/>
</dbReference>
<dbReference type="SUPFAM" id="SSF54373">
    <property type="entry name" value="FAD-linked reductases, C-terminal domain"/>
    <property type="match status" value="1"/>
</dbReference>
<dbReference type="SUPFAM" id="SSF51905">
    <property type="entry name" value="FAD/NAD(P)-binding domain"/>
    <property type="match status" value="1"/>
</dbReference>
<comment type="function">
    <text evidence="1">Oxidative deamination of D-amino acids.</text>
</comment>
<comment type="catalytic activity">
    <reaction evidence="1">
        <text>a D-alpha-amino acid + A + H2O = a 2-oxocarboxylate + AH2 + NH4(+)</text>
        <dbReference type="Rhea" id="RHEA:18125"/>
        <dbReference type="ChEBI" id="CHEBI:13193"/>
        <dbReference type="ChEBI" id="CHEBI:15377"/>
        <dbReference type="ChEBI" id="CHEBI:17499"/>
        <dbReference type="ChEBI" id="CHEBI:28938"/>
        <dbReference type="ChEBI" id="CHEBI:35179"/>
        <dbReference type="ChEBI" id="CHEBI:59871"/>
    </reaction>
</comment>
<comment type="cofactor">
    <cofactor evidence="1">
        <name>FAD</name>
        <dbReference type="ChEBI" id="CHEBI:57692"/>
    </cofactor>
</comment>
<comment type="pathway">
    <text>Amino-acid degradation; D-alanine degradation; NH(3) and pyruvate from D-alanine: step 1/1.</text>
</comment>
<comment type="similarity">
    <text evidence="1">Belongs to the DadA oxidoreductase family.</text>
</comment>
<feature type="chain" id="PRO_1000138671" description="D-amino acid dehydrogenase">
    <location>
        <begin position="1"/>
        <end position="434"/>
    </location>
</feature>
<feature type="binding site" evidence="1">
    <location>
        <begin position="3"/>
        <end position="17"/>
    </location>
    <ligand>
        <name>FAD</name>
        <dbReference type="ChEBI" id="CHEBI:57692"/>
    </ligand>
</feature>
<name>DADA_STRM5</name>
<accession>B4SIE4</accession>
<keyword id="KW-0274">FAD</keyword>
<keyword id="KW-0285">Flavoprotein</keyword>
<keyword id="KW-0560">Oxidoreductase</keyword>
<protein>
    <recommendedName>
        <fullName evidence="1">D-amino acid dehydrogenase</fullName>
        <ecNumber evidence="1">1.4.99.-</ecNumber>
    </recommendedName>
</protein>
<reference key="1">
    <citation type="submission" date="2008-06" db="EMBL/GenBank/DDBJ databases">
        <title>Complete sequence of Stenotrophomonas maltophilia R551-3.</title>
        <authorList>
            <consortium name="US DOE Joint Genome Institute"/>
            <person name="Lucas S."/>
            <person name="Copeland A."/>
            <person name="Lapidus A."/>
            <person name="Glavina del Rio T."/>
            <person name="Dalin E."/>
            <person name="Tice H."/>
            <person name="Pitluck S."/>
            <person name="Chain P."/>
            <person name="Malfatti S."/>
            <person name="Shin M."/>
            <person name="Vergez L."/>
            <person name="Lang D."/>
            <person name="Schmutz J."/>
            <person name="Larimer F."/>
            <person name="Land M."/>
            <person name="Hauser L."/>
            <person name="Kyrpides N."/>
            <person name="Mikhailova N."/>
            <person name="Taghavi S."/>
            <person name="Monchy S."/>
            <person name="Newman L."/>
            <person name="Vangronsveld J."/>
            <person name="van der Lelie D."/>
            <person name="Richardson P."/>
        </authorList>
    </citation>
    <scope>NUCLEOTIDE SEQUENCE [LARGE SCALE GENOMIC DNA]</scope>
    <source>
        <strain>R551-3</strain>
    </source>
</reference>
<organism>
    <name type="scientific">Stenotrophomonas maltophilia (strain R551-3)</name>
    <dbReference type="NCBI Taxonomy" id="391008"/>
    <lineage>
        <taxon>Bacteria</taxon>
        <taxon>Pseudomonadati</taxon>
        <taxon>Pseudomonadota</taxon>
        <taxon>Gammaproteobacteria</taxon>
        <taxon>Lysobacterales</taxon>
        <taxon>Lysobacteraceae</taxon>
        <taxon>Stenotrophomonas</taxon>
        <taxon>Stenotrophomonas maltophilia group</taxon>
    </lineage>
</organism>
<gene>
    <name evidence="1" type="primary">dadA</name>
    <name type="ordered locus">Smal_0444</name>
</gene>
<sequence length="434" mass="47804">MRVLVLGSGVIGTTSAWYLRQAGFEVTVIDRQPGPALETSFANAGQLSFGYTSPWAAPGVPKKAIGWLFEKHAPLAIKPGMDLAQYRWLWQMLRNCTHERYAINKARMVRMSEYSRDCLNELRAQIGIEFEGRDLGTTQLFRTQQQLDASAQDIEILAQYGVPYEVLDRAGIIQAEPALAHVDGLVGALRLPRDQTGDCQLFTRRLAQMCVDAGVEFRFDQDITGLVSDGERITGVHVNGTLETADRFVVALGSYSPALVAPLGMRLPVYPLKGYSLTLPITDPAMAPTSTILDESYKVAVTRFDDRIRVGGMAEVAGFDLSLSQRRRETLELVVSDLYPKGGDLSRAQFWTGLRPATPDGTPVIGATPFRNLYLNTGHGTLGWTMACGSGRYLADLMSARQPQISTEGLDVFRYGQYGHAPQHENRTCVLPAR</sequence>
<proteinExistence type="inferred from homology"/>
<evidence type="ECO:0000255" key="1">
    <source>
        <dbReference type="HAMAP-Rule" id="MF_01202"/>
    </source>
</evidence>